<feature type="signal peptide" evidence="1">
    <location>
        <begin position="1"/>
        <end position="26"/>
    </location>
</feature>
<feature type="chain" id="PRO_0000027345" description="Penicillin G acylase">
    <location>
        <begin position="27"/>
        <end position="846"/>
    </location>
</feature>
<feature type="chain" id="PRO_0000027346" description="Penicillin G acylase subunit alpha">
    <location>
        <begin position="27"/>
        <end position="235"/>
    </location>
</feature>
<feature type="propeptide" id="PRO_0000027347" description="Spacer peptide">
    <location>
        <begin position="236"/>
        <end position="289"/>
    </location>
</feature>
<feature type="chain" id="PRO_0000027348" description="Penicillin G acylase subunit beta">
    <location>
        <begin position="290"/>
        <end position="846"/>
    </location>
</feature>
<feature type="active site" description="Nucleophile">
    <location>
        <position position="290"/>
    </location>
</feature>
<feature type="binding site">
    <location>
        <position position="178"/>
    </location>
    <ligand>
        <name>Ca(2+)</name>
        <dbReference type="ChEBI" id="CHEBI:29108"/>
    </ligand>
</feature>
<feature type="binding site">
    <location>
        <position position="362"/>
    </location>
    <ligand>
        <name>Ca(2+)</name>
        <dbReference type="ChEBI" id="CHEBI:29108"/>
    </ligand>
</feature>
<feature type="binding site">
    <location>
        <position position="364"/>
    </location>
    <ligand>
        <name>Ca(2+)</name>
        <dbReference type="ChEBI" id="CHEBI:29108"/>
    </ligand>
</feature>
<feature type="binding site">
    <location>
        <position position="365"/>
    </location>
    <ligand>
        <name>Ca(2+)</name>
        <dbReference type="ChEBI" id="CHEBI:29108"/>
    </ligand>
</feature>
<feature type="binding site">
    <location>
        <position position="494"/>
    </location>
    <ligand>
        <name>Ca(2+)</name>
        <dbReference type="ChEBI" id="CHEBI:29108"/>
    </ligand>
</feature>
<feature type="binding site">
    <location>
        <position position="541"/>
    </location>
    <ligand>
        <name>Ca(2+)</name>
        <dbReference type="ChEBI" id="CHEBI:29108"/>
    </ligand>
</feature>
<feature type="mutagenesis site" description="Loss of activity." evidence="2">
    <original>S</original>
    <variation>C</variation>
    <location>
        <position position="290"/>
    </location>
</feature>
<feature type="sequence conflict" description="In Ref. 5; AAA24258." evidence="3" ref="5">
    <original>Q</original>
    <variation>R</variation>
    <location>
        <position position="68"/>
    </location>
</feature>
<feature type="sequence conflict" description="In Ref. 5; AAA24258." evidence="3" ref="5">
    <original>Q</original>
    <variation>R</variation>
    <location>
        <position position="77"/>
    </location>
</feature>
<feature type="sequence conflict" description="In Ref. 5; AAA24258." evidence="3" ref="5">
    <original>R</original>
    <variation>S</variation>
    <location>
        <position position="97"/>
    </location>
</feature>
<feature type="sequence conflict" description="In Ref. 3; AAA24270." evidence="3" ref="3">
    <original>A</original>
    <variation>R</variation>
    <location>
        <position position="103"/>
    </location>
</feature>
<feature type="sequence conflict" description="In Ref. 2 and 5." evidence="3" ref="2 5">
    <original>I</original>
    <variation>T</variation>
    <location>
        <position position="130"/>
    </location>
</feature>
<feature type="sequence conflict" description="In Ref. 5; AAA24258." evidence="3" ref="5">
    <original>A</original>
    <variation>G</variation>
    <location>
        <position position="217"/>
    </location>
</feature>
<feature type="sequence conflict" description="In Ref. 3; AAA24270." evidence="3" ref="3">
    <original>R</original>
    <variation>P</variation>
    <location>
        <position position="250"/>
    </location>
</feature>
<feature type="sequence conflict" description="In Ref. 1 and 5." evidence="3" ref="1 5">
    <original>A</original>
    <variation>V</variation>
    <location>
        <position position="272"/>
    </location>
</feature>
<feature type="sequence conflict" description="In Ref. 3; AAA24270." evidence="3" ref="3">
    <original>A</original>
    <variation>R</variation>
    <location>
        <position position="305"/>
    </location>
</feature>
<feature type="sequence conflict" description="In Ref. 5; AAA24258." evidence="3" ref="5">
    <original>PGLVFGHNG</original>
    <variation>LGWFPGYMV</variation>
    <location>
        <begin position="342"/>
        <end position="350"/>
    </location>
</feature>
<feature type="sequence conflict" description="In Ref. 2; AAA24324." evidence="3" ref="2">
    <original>G</original>
    <variation>P</variation>
    <location>
        <position position="632"/>
    </location>
</feature>
<feature type="sequence conflict" description="In Ref. 5; AAA24259." evidence="3" ref="5">
    <original>W</original>
    <variation>Q</variation>
    <location>
        <position position="789"/>
    </location>
</feature>
<feature type="strand" evidence="6">
    <location>
        <begin position="32"/>
        <end position="38"/>
    </location>
</feature>
<feature type="strand" evidence="6">
    <location>
        <begin position="43"/>
        <end position="46"/>
    </location>
</feature>
<feature type="helix" evidence="6">
    <location>
        <begin position="50"/>
        <end position="77"/>
    </location>
</feature>
<feature type="helix" evidence="6">
    <location>
        <begin position="81"/>
        <end position="84"/>
    </location>
</feature>
<feature type="helix" evidence="6">
    <location>
        <begin position="86"/>
        <end position="88"/>
    </location>
</feature>
<feature type="helix" evidence="6">
    <location>
        <begin position="89"/>
        <end position="97"/>
    </location>
</feature>
<feature type="helix" evidence="6">
    <location>
        <begin position="101"/>
        <end position="109"/>
    </location>
</feature>
<feature type="helix" evidence="6">
    <location>
        <begin position="113"/>
        <end position="135"/>
    </location>
</feature>
<feature type="helix" evidence="6">
    <location>
        <begin position="137"/>
        <end position="140"/>
    </location>
</feature>
<feature type="helix" evidence="6">
    <location>
        <begin position="143"/>
        <end position="148"/>
    </location>
</feature>
<feature type="helix" evidence="6">
    <location>
        <begin position="157"/>
        <end position="167"/>
    </location>
</feature>
<feature type="helix" evidence="6">
    <location>
        <begin position="169"/>
        <end position="172"/>
    </location>
</feature>
<feature type="helix" evidence="6">
    <location>
        <begin position="178"/>
        <end position="192"/>
    </location>
</feature>
<feature type="helix" evidence="6">
    <location>
        <begin position="194"/>
        <end position="204"/>
    </location>
</feature>
<feature type="strand" evidence="6">
    <location>
        <begin position="214"/>
        <end position="216"/>
    </location>
</feature>
<feature type="turn" evidence="6">
    <location>
        <begin position="218"/>
        <end position="220"/>
    </location>
</feature>
<feature type="helix" evidence="5">
    <location>
        <begin position="229"/>
        <end position="231"/>
    </location>
</feature>
<feature type="helix" evidence="6">
    <location>
        <begin position="232"/>
        <end position="234"/>
    </location>
</feature>
<feature type="helix" evidence="5">
    <location>
        <begin position="235"/>
        <end position="237"/>
    </location>
</feature>
<feature type="helix" evidence="5">
    <location>
        <begin position="246"/>
        <end position="249"/>
    </location>
</feature>
<feature type="helix" evidence="5">
    <location>
        <begin position="264"/>
        <end position="278"/>
    </location>
</feature>
<feature type="helix" evidence="5">
    <location>
        <begin position="279"/>
        <end position="281"/>
    </location>
</feature>
<feature type="strand" evidence="6">
    <location>
        <begin position="291"/>
        <end position="295"/>
    </location>
</feature>
<feature type="turn" evidence="6">
    <location>
        <begin position="297"/>
        <end position="299"/>
    </location>
</feature>
<feature type="strand" evidence="6">
    <location>
        <begin position="300"/>
        <end position="310"/>
    </location>
</feature>
<feature type="strand" evidence="6">
    <location>
        <begin position="316"/>
        <end position="318"/>
    </location>
</feature>
<feature type="strand" evidence="6">
    <location>
        <begin position="320"/>
        <end position="328"/>
    </location>
</feature>
<feature type="strand" evidence="6">
    <location>
        <begin position="331"/>
        <end position="338"/>
    </location>
</feature>
<feature type="strand" evidence="6">
    <location>
        <begin position="345"/>
        <end position="348"/>
    </location>
</feature>
<feature type="strand" evidence="6">
    <location>
        <begin position="350"/>
        <end position="358"/>
    </location>
</feature>
<feature type="strand" evidence="6">
    <location>
        <begin position="364"/>
        <end position="370"/>
    </location>
</feature>
<feature type="strand" evidence="9">
    <location>
        <begin position="373"/>
        <end position="375"/>
    </location>
</feature>
<feature type="strand" evidence="6">
    <location>
        <begin position="378"/>
        <end position="381"/>
    </location>
</feature>
<feature type="strand" evidence="6">
    <location>
        <begin position="384"/>
        <end position="387"/>
    </location>
</feature>
<feature type="strand" evidence="6">
    <location>
        <begin position="389"/>
        <end position="395"/>
    </location>
</feature>
<feature type="strand" evidence="6">
    <location>
        <begin position="403"/>
        <end position="410"/>
    </location>
</feature>
<feature type="strand" evidence="6">
    <location>
        <begin position="413"/>
        <end position="419"/>
    </location>
</feature>
<feature type="turn" evidence="6">
    <location>
        <begin position="420"/>
        <end position="423"/>
    </location>
</feature>
<feature type="strand" evidence="6">
    <location>
        <begin position="424"/>
        <end position="430"/>
    </location>
</feature>
<feature type="turn" evidence="6">
    <location>
        <begin position="431"/>
        <end position="434"/>
    </location>
</feature>
<feature type="helix" evidence="6">
    <location>
        <begin position="436"/>
        <end position="445"/>
    </location>
</feature>
<feature type="helix" evidence="6">
    <location>
        <begin position="446"/>
        <end position="448"/>
    </location>
</feature>
<feature type="helix" evidence="6">
    <location>
        <begin position="452"/>
        <end position="459"/>
    </location>
</feature>
<feature type="strand" evidence="6">
    <location>
        <begin position="464"/>
        <end position="472"/>
    </location>
</feature>
<feature type="strand" evidence="6">
    <location>
        <begin position="477"/>
        <end position="483"/>
    </location>
</feature>
<feature type="strand" evidence="6">
    <location>
        <begin position="498"/>
        <end position="502"/>
    </location>
</feature>
<feature type="helix" evidence="6">
    <location>
        <begin position="512"/>
        <end position="514"/>
    </location>
</feature>
<feature type="strand" evidence="6">
    <location>
        <begin position="517"/>
        <end position="520"/>
    </location>
</feature>
<feature type="strand" evidence="6">
    <location>
        <begin position="524"/>
        <end position="530"/>
    </location>
</feature>
<feature type="strand" evidence="6">
    <location>
        <begin position="532"/>
        <end position="534"/>
    </location>
</feature>
<feature type="helix" evidence="6">
    <location>
        <begin position="553"/>
        <end position="561"/>
    </location>
</feature>
<feature type="strand" evidence="6">
    <location>
        <begin position="562"/>
        <end position="564"/>
    </location>
</feature>
<feature type="helix" evidence="6">
    <location>
        <begin position="568"/>
        <end position="580"/>
    </location>
</feature>
<feature type="helix" evidence="6">
    <location>
        <begin position="585"/>
        <end position="596"/>
    </location>
</feature>
<feature type="helix" evidence="6">
    <location>
        <begin position="604"/>
        <end position="613"/>
    </location>
</feature>
<feature type="strand" evidence="6">
    <location>
        <begin position="625"/>
        <end position="630"/>
    </location>
</feature>
<feature type="helix" evidence="6">
    <location>
        <begin position="632"/>
        <end position="646"/>
    </location>
</feature>
<feature type="helix" evidence="6">
    <location>
        <begin position="648"/>
        <end position="651"/>
    </location>
</feature>
<feature type="helix" evidence="6">
    <location>
        <begin position="656"/>
        <end position="660"/>
    </location>
</feature>
<feature type="helix" evidence="6">
    <location>
        <begin position="680"/>
        <end position="689"/>
    </location>
</feature>
<feature type="helix" evidence="6">
    <location>
        <begin position="690"/>
        <end position="693"/>
    </location>
</feature>
<feature type="strand" evidence="5">
    <location>
        <begin position="694"/>
        <end position="696"/>
    </location>
</feature>
<feature type="turn" evidence="6">
    <location>
        <begin position="702"/>
        <end position="705"/>
    </location>
</feature>
<feature type="helix" evidence="6">
    <location>
        <begin position="708"/>
        <end position="727"/>
    </location>
</feature>
<feature type="helix" evidence="6">
    <location>
        <begin position="731"/>
        <end position="733"/>
    </location>
</feature>
<feature type="strand" evidence="6">
    <location>
        <begin position="741"/>
        <end position="746"/>
    </location>
</feature>
<feature type="strand" evidence="6">
    <location>
        <begin position="752"/>
        <end position="754"/>
    </location>
</feature>
<feature type="helix" evidence="6">
    <location>
        <begin position="756"/>
        <end position="758"/>
    </location>
</feature>
<feature type="strand" evidence="6">
    <location>
        <begin position="760"/>
        <end position="764"/>
    </location>
</feature>
<feature type="strand" evidence="6">
    <location>
        <begin position="770"/>
        <end position="778"/>
    </location>
</feature>
<feature type="strand" evidence="7">
    <location>
        <begin position="780"/>
        <end position="783"/>
    </location>
</feature>
<feature type="strand" evidence="6">
    <location>
        <begin position="785"/>
        <end position="791"/>
    </location>
</feature>
<feature type="strand" evidence="4">
    <location>
        <begin position="810"/>
        <end position="813"/>
    </location>
</feature>
<feature type="helix" evidence="6">
    <location>
        <begin position="814"/>
        <end position="818"/>
    </location>
</feature>
<feature type="strand" evidence="8">
    <location>
        <begin position="823"/>
        <end position="825"/>
    </location>
</feature>
<feature type="helix" evidence="6">
    <location>
        <begin position="829"/>
        <end position="834"/>
    </location>
</feature>
<feature type="strand" evidence="6">
    <location>
        <begin position="836"/>
        <end position="843"/>
    </location>
</feature>
<accession>P06875</accession>
<accession>Q47434</accession>
<accession>Q47435</accession>
<accession>Q47436</accession>
<accession>Q47437</accession>
<accession>Q60253</accession>
<sequence>MKNRNRMIVNCVTASLMYYWSLPALAEQSSSEIKIVRDEYGMPHIYANDTWHLFYGYGYVVAQDRLFQMEMARRSTQGTVAEVLGKDFVKFDKDIRRNYWPDAIRAQIAALSPEDMSILQGYADGMNAWIDKVNTNPETLLPKQFNTFGFTPKRWEPFDVAMIFVGTMANRFSDSTSEIDNLALLTALKDKYGVSQGMAVFNQLKWLVNPSAPTTIAVQESNYPLKFNQQNSQTAALLPRYDLPAPMLDRPAKGADGALLALTAGKNRETIAAQFAQGGANGLAGYPTTSNMWVIGKSKAQDAKAIMVNGPQFGWYAPAYTYGIGLHGAGYDVTGNTPFAYPGLVFGHNGVISWGSTAGFGDDVDIFAERLSAEKPGYYLHNGKWVKMLSREETITVKNGQAETFTVWRTVHGNILQTDQTTQTAYAKSRAWDGKEVASLLAWTHQMKAKNWQEWTQQAAKQALTINWYYADVNGNIGYVHTGAYPDRQSGHDPRLPVPGTGKWDWKGLLPFEMNPKVYNPQSGYIANWNNSPQKDYPASDLFAFLWGGADRVTEIDRLLEQKPRLTADQAWDVIRQTSRQDLNLRLFLPTLQAATSGLTQSDPRRQLVETLTRWDGINLLNDDGKTWQQPGSAILNVWLTSMLKRTVVAAVPMPFDKWYSASGYETTQDGPTGSLNISVGAKILYEAVQGDKSPIPQAVDLFAGKPQQEVVLAALEDTWETLSKRYGNNVSNWKTPAMALTFRANNFFGVPQAAAEETRHQAEYQNRGTENDMIVFSPTTSDRPVLAWDVVAPGQSGFIAPDGTVDKHYEDQLKMYENFGRKSLWLTKQDVEAHKESQEVLHVQR</sequence>
<proteinExistence type="evidence at protein level"/>
<protein>
    <recommendedName>
        <fullName>Penicillin G acylase</fullName>
        <ecNumber>3.5.1.11</ecNumber>
    </recommendedName>
    <alternativeName>
        <fullName>Penicillin G amidase</fullName>
    </alternativeName>
    <alternativeName>
        <fullName>Penicillin G amidohydrolase</fullName>
    </alternativeName>
    <component>
        <recommendedName>
            <fullName>Penicillin G acylase subunit alpha</fullName>
        </recommendedName>
    </component>
    <component>
        <recommendedName>
            <fullName>Penicillin G acylase subunit beta</fullName>
        </recommendedName>
    </component>
</protein>
<evidence type="ECO:0000269" key="1">
    <source>
    </source>
</evidence>
<evidence type="ECO:0000269" key="2">
    <source>
    </source>
</evidence>
<evidence type="ECO:0000305" key="3"/>
<evidence type="ECO:0007829" key="4">
    <source>
        <dbReference type="PDB" id="1AI4"/>
    </source>
</evidence>
<evidence type="ECO:0007829" key="5">
    <source>
        <dbReference type="PDB" id="1E3A"/>
    </source>
</evidence>
<evidence type="ECO:0007829" key="6">
    <source>
        <dbReference type="PDB" id="1GK9"/>
    </source>
</evidence>
<evidence type="ECO:0007829" key="7">
    <source>
        <dbReference type="PDB" id="1GM8"/>
    </source>
</evidence>
<evidence type="ECO:0007829" key="8">
    <source>
        <dbReference type="PDB" id="1K7D"/>
    </source>
</evidence>
<evidence type="ECO:0007829" key="9">
    <source>
        <dbReference type="PDB" id="1PNK"/>
    </source>
</evidence>
<keyword id="KW-0002">3D-structure</keyword>
<keyword id="KW-0046">Antibiotic resistance</keyword>
<keyword id="KW-0106">Calcium</keyword>
<keyword id="KW-0903">Direct protein sequencing</keyword>
<keyword id="KW-0378">Hydrolase</keyword>
<keyword id="KW-0479">Metal-binding</keyword>
<keyword id="KW-0574">Periplasm</keyword>
<keyword id="KW-0732">Signal</keyword>
<keyword id="KW-0865">Zymogen</keyword>
<name>PAC_ECOLX</name>
<organism>
    <name type="scientific">Escherichia coli</name>
    <dbReference type="NCBI Taxonomy" id="562"/>
    <lineage>
        <taxon>Bacteria</taxon>
        <taxon>Pseudomonadati</taxon>
        <taxon>Pseudomonadota</taxon>
        <taxon>Gammaproteobacteria</taxon>
        <taxon>Enterobacterales</taxon>
        <taxon>Enterobacteriaceae</taxon>
        <taxon>Escherichia</taxon>
    </lineage>
</organism>
<reference key="1">
    <citation type="journal article" date="1986" name="Nucleic Acids Res.">
        <title>Penicillin acylase from E. coli: unique gene-protein relation.</title>
        <authorList>
            <person name="Schumacher G."/>
            <person name="Sizmann D."/>
            <person name="Haug H."/>
            <person name="Buckel P."/>
            <person name="Boeck A."/>
        </authorList>
    </citation>
    <scope>NUCLEOTIDE SEQUENCE [GENOMIC DNA]</scope>
</reference>
<reference key="2">
    <citation type="journal article" date="1987" name="Gene">
        <title>Complete nucleotide sequence of the penicillin G acylase gene and the flanking regions, and its expression in Escherichia coli.</title>
        <authorList>
            <person name="Oh S.-J."/>
            <person name="Kim Y.-C."/>
            <person name="Park Y.-W."/>
            <person name="Min S.-Y."/>
            <person name="Kim I.-S."/>
            <person name="Kang H.-S."/>
        </authorList>
    </citation>
    <scope>NUCLEOTIDE SEQUENCE [GENOMIC DNA]</scope>
</reference>
<reference key="3">
    <citation type="journal article" date="1985" name="Gene">
        <title>A common precursor for the two subunits of the penicillin acylase from Escherichia coli ATCC11105.</title>
        <authorList>
            <person name="Oliver G."/>
            <person name="Valle F."/>
            <person name="Rosetti F."/>
            <person name="Gomez-Pedrozo M."/>
            <person name="Santamaria P."/>
            <person name="Gosset G."/>
            <person name="Bolivar F."/>
        </authorList>
    </citation>
    <scope>NUCLEOTIDE SEQUENCE [GENOMIC DNA] OF 1-368</scope>
    <source>
        <strain>W / ATCC 11105 / DSM 1900 / 113-3</strain>
    </source>
</reference>
<reference key="4">
    <citation type="journal article" date="1986" name="Gene">
        <title>Characterization of the regulatory region of the Escherichia coli penicillin acylase structural gene.</title>
        <authorList>
            <person name="Valle F."/>
            <person name="Gosset G."/>
            <person name="Tenorio B."/>
            <person name="Oliver G."/>
            <person name="Bolivar F."/>
        </authorList>
    </citation>
    <scope>NUCLEOTIDE SEQUENCE [GENOMIC DNA] OF 1-368</scope>
</reference>
<reference key="5">
    <citation type="journal article" date="1985" name="J. Mol. Appl. Genet.">
        <title>Structure of the penicillin acylase gene from Escherichia coli: a periplasmic enzyme that undergoes multiple proteolytic processing.</title>
        <authorList>
            <person name="Bruns W."/>
            <person name="Hoppe J."/>
            <person name="Tsai H."/>
            <person name="Bruning H.J."/>
            <person name="Maywald F."/>
            <person name="Collins J."/>
            <person name="Mayer H."/>
        </authorList>
    </citation>
    <scope>NUCLEOTIDE SEQUENCE [GENOMIC DNA] OF 1-350 AND 741-846</scope>
</reference>
<reference key="6">
    <citation type="submission" date="1998-11" db="EMBL/GenBank/DDBJ databases">
        <title>Transcriptional and gene fusion analyses of the Escherichia coli penicillin amidase gene expression.</title>
        <authorList>
            <person name="Radoja S."/>
            <person name="Francetic O."/>
            <person name="Stojicevic N."/>
            <person name="Moric I."/>
            <person name="Glisin S."/>
            <person name="Konstantinovic M."/>
        </authorList>
    </citation>
    <scope>NUCLEOTIDE SEQUENCE [GENOMIC DNA] OF 1-95</scope>
    <source>
        <strain>W / ATCC 11105 / DSM 1900 / 113-3</strain>
    </source>
</reference>
<reference key="7">
    <citation type="journal article" date="1991" name="Eur. J. Biochem.">
        <title>Site-directed chemical conversion of serine to cysteine in penicillin acylase from Escherichia coli ATCC 11105. Effect on conformation and catalytic activity.</title>
        <authorList>
            <person name="Slade A."/>
            <person name="Horrocks A.J."/>
            <person name="Lindsay C.D."/>
            <person name="Dunbar B."/>
            <person name="Virden R."/>
        </authorList>
    </citation>
    <scope>PROTEIN SEQUENCE OF 27-36 AND 291-299</scope>
    <source>
        <strain>W / ATCC 11105 / DSM 1900 / 113-3</strain>
    </source>
</reference>
<reference key="8">
    <citation type="journal article" date="1990" name="Eur. J. Biochem.">
        <title>Primary structure requirements for the maturation in vivo of penicillin acylase from Escherichia coli ATCC 11105.</title>
        <authorList>
            <person name="Sizmann D."/>
            <person name="Keilmann C."/>
            <person name="Boeck A."/>
        </authorList>
    </citation>
    <scope>PROTEOLYTIC PROCESSING</scope>
</reference>
<reference key="9">
    <citation type="journal article" date="1995" name="Nature">
        <title>Penicillin acylase has a single-amino-acid catalytic centre.</title>
        <authorList>
            <person name="Duggleby H.J."/>
            <person name="Tolley S.P."/>
            <person name="Hill C.P."/>
            <person name="Dodson E.J."/>
            <person name="Dodson G."/>
            <person name="Moody P.C.E."/>
        </authorList>
    </citation>
    <scope>X-RAY CRYSTALLOGRAPHY (1.9 ANGSTROMS)</scope>
    <scope>MUTAGENESIS OF SER-290</scope>
    <source>
        <strain>W / ATCC 11105 / DSM 1900 / 113-3</strain>
    </source>
</reference>
<reference key="10">
    <citation type="journal article" date="2001" name="J. Mol. Biol.">
        <title>Crystal structures of penicillin acylase enzyme-substrate complexes: structural insights into the catalytic mechanism.</title>
        <authorList>
            <person name="McVey C.E."/>
            <person name="Walsh M.A."/>
            <person name="Dodson G.G."/>
            <person name="Wilson K.S."/>
            <person name="Brannigan J.A."/>
        </authorList>
    </citation>
    <scope>X-RAY CRYSTALLOGRAPHY (1.45 ANGSTROMS) OF 27-235</scope>
</reference>
<comment type="catalytic activity">
    <reaction>
        <text>a penicillin + H2O = 6-aminopenicillanate + a carboxylate</text>
        <dbReference type="Rhea" id="RHEA:18693"/>
        <dbReference type="ChEBI" id="CHEBI:15377"/>
        <dbReference type="ChEBI" id="CHEBI:29067"/>
        <dbReference type="ChEBI" id="CHEBI:51356"/>
        <dbReference type="ChEBI" id="CHEBI:57869"/>
        <dbReference type="EC" id="3.5.1.11"/>
    </reaction>
</comment>
<comment type="cofactor">
    <cofactor>
        <name>Ca(2+)</name>
        <dbReference type="ChEBI" id="CHEBI:29108"/>
    </cofactor>
    <text>Binds 1 Ca(2+) ion per dimer.</text>
</comment>
<comment type="subunit">
    <text>Heterodimer of an alpha subunit and a beta subunit processed from the same precursor.</text>
</comment>
<comment type="subcellular location">
    <subcellularLocation>
        <location>Periplasm</location>
    </subcellularLocation>
</comment>
<comment type="similarity">
    <text evidence="3">Belongs to the peptidase S45 family.</text>
</comment>
<dbReference type="EC" id="3.5.1.11"/>
<dbReference type="EMBL" id="M15950">
    <property type="protein sequence ID" value="AAA24269.1"/>
    <property type="molecule type" value="Genomic_DNA"/>
</dbReference>
<dbReference type="EMBL" id="X04114">
    <property type="protein sequence ID" value="CAA27728.1"/>
    <property type="molecule type" value="Genomic_DNA"/>
</dbReference>
<dbReference type="EMBL" id="M17609">
    <property type="protein sequence ID" value="AAA24324.1"/>
    <property type="molecule type" value="Genomic_DNA"/>
</dbReference>
<dbReference type="EMBL" id="M14424">
    <property type="protein sequence ID" value="AAA24270.1"/>
    <property type="molecule type" value="Genomic_DNA"/>
</dbReference>
<dbReference type="EMBL" id="AH000887">
    <property type="protein sequence ID" value="AAA24258.1"/>
    <property type="molecule type" value="Genomic_DNA"/>
</dbReference>
<dbReference type="EMBL" id="AH000887">
    <property type="protein sequence ID" value="AAA24259.1"/>
    <property type="molecule type" value="Genomic_DNA"/>
</dbReference>
<dbReference type="EMBL" id="AF109125">
    <property type="protein sequence ID" value="AAD19653.1"/>
    <property type="molecule type" value="Genomic_DNA"/>
</dbReference>
<dbReference type="PIR" id="A23593">
    <property type="entry name" value="PNECA"/>
</dbReference>
<dbReference type="RefSeq" id="WP_000797400.1">
    <property type="nucleotide sequence ID" value="NZ_WXYX01000001.1"/>
</dbReference>
<dbReference type="PDB" id="1AI4">
    <property type="method" value="X-ray"/>
    <property type="resolution" value="2.35 A"/>
    <property type="chains" value="A=27-235, B=290-846"/>
</dbReference>
<dbReference type="PDB" id="1AI5">
    <property type="method" value="X-ray"/>
    <property type="resolution" value="2.36 A"/>
    <property type="chains" value="A=27-235, B=290-846"/>
</dbReference>
<dbReference type="PDB" id="1AI6">
    <property type="method" value="X-ray"/>
    <property type="resolution" value="2.55 A"/>
    <property type="chains" value="A=27-235, B=290-846"/>
</dbReference>
<dbReference type="PDB" id="1AI7">
    <property type="method" value="X-ray"/>
    <property type="resolution" value="2.50 A"/>
    <property type="chains" value="A=27-235, B=290-846"/>
</dbReference>
<dbReference type="PDB" id="1AJN">
    <property type="method" value="X-ray"/>
    <property type="resolution" value="2.36 A"/>
    <property type="chains" value="A=27-235, B=290-846"/>
</dbReference>
<dbReference type="PDB" id="1AJP">
    <property type="method" value="X-ray"/>
    <property type="resolution" value="2.31 A"/>
    <property type="chains" value="A=27-235, B=290-846"/>
</dbReference>
<dbReference type="PDB" id="1AJQ">
    <property type="method" value="X-ray"/>
    <property type="resolution" value="2.05 A"/>
    <property type="chains" value="A=27-235, B=290-846"/>
</dbReference>
<dbReference type="PDB" id="1E3A">
    <property type="method" value="X-ray"/>
    <property type="resolution" value="1.80 A"/>
    <property type="chains" value="A=27-286, B=287-846"/>
</dbReference>
<dbReference type="PDB" id="1FXH">
    <property type="method" value="X-ray"/>
    <property type="resolution" value="1.97 A"/>
    <property type="chains" value="A=27-235, B=290-846"/>
</dbReference>
<dbReference type="PDB" id="1FXV">
    <property type="method" value="X-ray"/>
    <property type="resolution" value="2.25 A"/>
    <property type="chains" value="A=27-235, B=290-846"/>
</dbReference>
<dbReference type="PDB" id="1GK9">
    <property type="method" value="X-ray"/>
    <property type="resolution" value="1.30 A"/>
    <property type="chains" value="A=27-286, B=290-846"/>
</dbReference>
<dbReference type="PDB" id="1GKF">
    <property type="method" value="X-ray"/>
    <property type="resolution" value="1.41 A"/>
    <property type="chains" value="A=27-286, B=290-846"/>
</dbReference>
<dbReference type="PDB" id="1GM7">
    <property type="method" value="X-ray"/>
    <property type="resolution" value="1.45 A"/>
    <property type="chains" value="A=27-235, B=290-846"/>
</dbReference>
<dbReference type="PDB" id="1GM8">
    <property type="method" value="X-ray"/>
    <property type="resolution" value="2.00 A"/>
    <property type="chains" value="A=27-235, B=290-846"/>
</dbReference>
<dbReference type="PDB" id="1GM9">
    <property type="method" value="X-ray"/>
    <property type="resolution" value="1.80 A"/>
    <property type="chains" value="A=27-235, B=290-846"/>
</dbReference>
<dbReference type="PDB" id="1H2G">
    <property type="method" value="X-ray"/>
    <property type="resolution" value="2.00 A"/>
    <property type="chains" value="A=27-235, B=290-846"/>
</dbReference>
<dbReference type="PDB" id="1JX9">
    <property type="method" value="X-ray"/>
    <property type="resolution" value="2.28 A"/>
    <property type="chains" value="A=26-234, B=290-846"/>
</dbReference>
<dbReference type="PDB" id="1K5Q">
    <property type="method" value="X-ray"/>
    <property type="resolution" value="2.34 A"/>
    <property type="chains" value="A=26-234, B=290-846"/>
</dbReference>
<dbReference type="PDB" id="1K5S">
    <property type="method" value="X-ray"/>
    <property type="resolution" value="2.43 A"/>
    <property type="chains" value="A=26-234, B=290-846"/>
</dbReference>
<dbReference type="PDB" id="1K7D">
    <property type="method" value="X-ray"/>
    <property type="resolution" value="2.15 A"/>
    <property type="chains" value="A=26-234, B=290-846"/>
</dbReference>
<dbReference type="PDB" id="1KEC">
    <property type="method" value="X-ray"/>
    <property type="resolution" value="2.30 A"/>
    <property type="chains" value="A=26-234, B=290-846"/>
</dbReference>
<dbReference type="PDB" id="1PNK">
    <property type="method" value="X-ray"/>
    <property type="resolution" value="1.90 A"/>
    <property type="chains" value="A=27-235, B=290-846"/>
</dbReference>
<dbReference type="PDB" id="1PNL">
    <property type="method" value="X-ray"/>
    <property type="resolution" value="2.50 A"/>
    <property type="chains" value="A=27-235, B=290-846"/>
</dbReference>
<dbReference type="PDB" id="1PNM">
    <property type="method" value="X-ray"/>
    <property type="resolution" value="2.50 A"/>
    <property type="chains" value="A=27-235, B=290-846"/>
</dbReference>
<dbReference type="PDBsum" id="1AI4"/>
<dbReference type="PDBsum" id="1AI5"/>
<dbReference type="PDBsum" id="1AI6"/>
<dbReference type="PDBsum" id="1AI7"/>
<dbReference type="PDBsum" id="1AJN"/>
<dbReference type="PDBsum" id="1AJP"/>
<dbReference type="PDBsum" id="1AJQ"/>
<dbReference type="PDBsum" id="1E3A"/>
<dbReference type="PDBsum" id="1FXH"/>
<dbReference type="PDBsum" id="1FXV"/>
<dbReference type="PDBsum" id="1GK9"/>
<dbReference type="PDBsum" id="1GKF"/>
<dbReference type="PDBsum" id="1GM7"/>
<dbReference type="PDBsum" id="1GM8"/>
<dbReference type="PDBsum" id="1GM9"/>
<dbReference type="PDBsum" id="1H2G"/>
<dbReference type="PDBsum" id="1JX9"/>
<dbReference type="PDBsum" id="1K5Q"/>
<dbReference type="PDBsum" id="1K5S"/>
<dbReference type="PDBsum" id="1K7D"/>
<dbReference type="PDBsum" id="1KEC"/>
<dbReference type="PDBsum" id="1PNK"/>
<dbReference type="PDBsum" id="1PNL"/>
<dbReference type="PDBsum" id="1PNM"/>
<dbReference type="SMR" id="P06875"/>
<dbReference type="DrugBank" id="DB01702">
    <property type="generic name" value="2-(3,4-Dihydroxyphenyl)Acetic Acid"/>
</dbReference>
<dbReference type="DrugBank" id="DB08193">
    <property type="generic name" value="2-(3-NITROPHENYL)ACETIC ACID"/>
</dbReference>
<dbReference type="DrugBank" id="DB08327">
    <property type="generic name" value="Homogentisic acid"/>
</dbReference>
<dbReference type="DrugBank" id="DB08559">
    <property type="generic name" value="N-[(2S,4S,6R)-2-(dihydroxymethyl)-4-hydroxy-3,3-dimethyl-7-oxo-4lambda~4~-thia-1-azabicyclo[3.2.0]hept-6-yl]-2-phenylacetamide"/>
</dbReference>
<dbReference type="DrugBank" id="DB07331">
    <property type="generic name" value="p-Nitrophenylacetic acid"/>
</dbReference>
<dbReference type="MEROPS" id="S45.001"/>
<dbReference type="OMA" id="EMDVRRH"/>
<dbReference type="BioCyc" id="MetaCyc:MONOMER-18775"/>
<dbReference type="BRENDA" id="3.5.1.11">
    <property type="organism ID" value="2026"/>
</dbReference>
<dbReference type="SABIO-RK" id="P06875"/>
<dbReference type="EvolutionaryTrace" id="P06875"/>
<dbReference type="GO" id="GO:0042597">
    <property type="term" value="C:periplasmic space"/>
    <property type="evidence" value="ECO:0007669"/>
    <property type="project" value="UniProtKB-SubCell"/>
</dbReference>
<dbReference type="GO" id="GO:0046872">
    <property type="term" value="F:metal ion binding"/>
    <property type="evidence" value="ECO:0007669"/>
    <property type="project" value="UniProtKB-KW"/>
</dbReference>
<dbReference type="GO" id="GO:0008953">
    <property type="term" value="F:penicillin amidase activity"/>
    <property type="evidence" value="ECO:0007669"/>
    <property type="project" value="UniProtKB-EC"/>
</dbReference>
<dbReference type="GO" id="GO:0017000">
    <property type="term" value="P:antibiotic biosynthetic process"/>
    <property type="evidence" value="ECO:0007669"/>
    <property type="project" value="InterPro"/>
</dbReference>
<dbReference type="GO" id="GO:0046677">
    <property type="term" value="P:response to antibiotic"/>
    <property type="evidence" value="ECO:0007669"/>
    <property type="project" value="UniProtKB-KW"/>
</dbReference>
<dbReference type="CDD" id="cd03748">
    <property type="entry name" value="Ntn_PGA"/>
    <property type="match status" value="1"/>
</dbReference>
<dbReference type="Gene3D" id="1.10.1400.10">
    <property type="match status" value="1"/>
</dbReference>
<dbReference type="Gene3D" id="1.10.287.150">
    <property type="match status" value="1"/>
</dbReference>
<dbReference type="Gene3D" id="2.30.120.10">
    <property type="match status" value="1"/>
</dbReference>
<dbReference type="Gene3D" id="3.60.20.10">
    <property type="entry name" value="Glutamine Phosphoribosylpyrophosphate, subunit 1, domain 1"/>
    <property type="match status" value="1"/>
</dbReference>
<dbReference type="Gene3D" id="1.10.439.10">
    <property type="entry name" value="Penicillin Amidohydrolase, domain 1"/>
    <property type="match status" value="1"/>
</dbReference>
<dbReference type="InterPro" id="IPR029055">
    <property type="entry name" value="Ntn_hydrolases_N"/>
</dbReference>
<dbReference type="InterPro" id="IPR014395">
    <property type="entry name" value="Pen/GL7ACA/AHL_acylase"/>
</dbReference>
<dbReference type="InterPro" id="IPR043147">
    <property type="entry name" value="Penicillin_amidase_A-knob"/>
</dbReference>
<dbReference type="InterPro" id="IPR023343">
    <property type="entry name" value="Penicillin_amidase_dom1"/>
</dbReference>
<dbReference type="InterPro" id="IPR043146">
    <property type="entry name" value="Penicillin_amidase_N_B-knob"/>
</dbReference>
<dbReference type="InterPro" id="IPR033813">
    <property type="entry name" value="PGA_C"/>
</dbReference>
<dbReference type="InterPro" id="IPR002692">
    <property type="entry name" value="S45"/>
</dbReference>
<dbReference type="PANTHER" id="PTHR34218:SF4">
    <property type="entry name" value="ACYL-HOMOSERINE LACTONE ACYLASE QUIP"/>
    <property type="match status" value="1"/>
</dbReference>
<dbReference type="PANTHER" id="PTHR34218">
    <property type="entry name" value="PEPTIDASE S45 PENICILLIN AMIDASE"/>
    <property type="match status" value="1"/>
</dbReference>
<dbReference type="Pfam" id="PF01804">
    <property type="entry name" value="Penicil_amidase"/>
    <property type="match status" value="1"/>
</dbReference>
<dbReference type="PIRSF" id="PIRSF001227">
    <property type="entry name" value="Pen_acylase"/>
    <property type="match status" value="1"/>
</dbReference>
<dbReference type="SUPFAM" id="SSF56235">
    <property type="entry name" value="N-terminal nucleophile aminohydrolases (Ntn hydrolases)"/>
    <property type="match status" value="1"/>
</dbReference>
<gene>
    <name type="primary">pac</name>
</gene>